<gene>
    <name type="primary">adh</name>
    <name type="ordered locus">SAV0605</name>
</gene>
<accession>Q99W07</accession>
<reference key="1">
    <citation type="journal article" date="2001" name="Lancet">
        <title>Whole genome sequencing of meticillin-resistant Staphylococcus aureus.</title>
        <authorList>
            <person name="Kuroda M."/>
            <person name="Ohta T."/>
            <person name="Uchiyama I."/>
            <person name="Baba T."/>
            <person name="Yuzawa H."/>
            <person name="Kobayashi I."/>
            <person name="Cui L."/>
            <person name="Oguchi A."/>
            <person name="Aoki K."/>
            <person name="Nagai Y."/>
            <person name="Lian J.-Q."/>
            <person name="Ito T."/>
            <person name="Kanamori M."/>
            <person name="Matsumaru H."/>
            <person name="Maruyama A."/>
            <person name="Murakami H."/>
            <person name="Hosoyama A."/>
            <person name="Mizutani-Ui Y."/>
            <person name="Takahashi N.K."/>
            <person name="Sawano T."/>
            <person name="Inoue R."/>
            <person name="Kaito C."/>
            <person name="Sekimizu K."/>
            <person name="Hirakawa H."/>
            <person name="Kuhara S."/>
            <person name="Goto S."/>
            <person name="Yabuzaki J."/>
            <person name="Kanehisa M."/>
            <person name="Yamashita A."/>
            <person name="Oshima K."/>
            <person name="Furuya K."/>
            <person name="Yoshino C."/>
            <person name="Shiba T."/>
            <person name="Hattori M."/>
            <person name="Ogasawara N."/>
            <person name="Hayashi H."/>
            <person name="Hiramatsu K."/>
        </authorList>
    </citation>
    <scope>NUCLEOTIDE SEQUENCE [LARGE SCALE GENOMIC DNA]</scope>
    <source>
        <strain>Mu50 / ATCC 700699</strain>
    </source>
</reference>
<feature type="chain" id="PRO_0000273036" description="Alcohol dehydrogenase">
    <location>
        <begin position="1"/>
        <end position="336"/>
    </location>
</feature>
<feature type="binding site" evidence="1">
    <location>
        <position position="37"/>
    </location>
    <ligand>
        <name>Zn(2+)</name>
        <dbReference type="ChEBI" id="CHEBI:29105"/>
        <label>1</label>
        <note>catalytic</note>
    </ligand>
</feature>
<feature type="binding site" evidence="1">
    <location>
        <position position="58"/>
    </location>
    <ligand>
        <name>Zn(2+)</name>
        <dbReference type="ChEBI" id="CHEBI:29105"/>
        <label>1</label>
        <note>catalytic</note>
    </ligand>
</feature>
<feature type="binding site" evidence="1">
    <location>
        <position position="89"/>
    </location>
    <ligand>
        <name>Zn(2+)</name>
        <dbReference type="ChEBI" id="CHEBI:29105"/>
        <label>2</label>
    </ligand>
</feature>
<feature type="binding site" evidence="1">
    <location>
        <position position="92"/>
    </location>
    <ligand>
        <name>Zn(2+)</name>
        <dbReference type="ChEBI" id="CHEBI:29105"/>
        <label>2</label>
    </ligand>
</feature>
<feature type="binding site" evidence="1">
    <location>
        <position position="95"/>
    </location>
    <ligand>
        <name>Zn(2+)</name>
        <dbReference type="ChEBI" id="CHEBI:29105"/>
        <label>2</label>
    </ligand>
</feature>
<feature type="binding site" evidence="1">
    <location>
        <position position="103"/>
    </location>
    <ligand>
        <name>Zn(2+)</name>
        <dbReference type="ChEBI" id="CHEBI:29105"/>
        <label>2</label>
    </ligand>
</feature>
<feature type="binding site" evidence="1">
    <location>
        <position position="145"/>
    </location>
    <ligand>
        <name>Zn(2+)</name>
        <dbReference type="ChEBI" id="CHEBI:29105"/>
        <label>1</label>
        <note>catalytic</note>
    </ligand>
</feature>
<comment type="catalytic activity">
    <reaction>
        <text>a primary alcohol + NAD(+) = an aldehyde + NADH + H(+)</text>
        <dbReference type="Rhea" id="RHEA:10736"/>
        <dbReference type="ChEBI" id="CHEBI:15378"/>
        <dbReference type="ChEBI" id="CHEBI:15734"/>
        <dbReference type="ChEBI" id="CHEBI:17478"/>
        <dbReference type="ChEBI" id="CHEBI:57540"/>
        <dbReference type="ChEBI" id="CHEBI:57945"/>
        <dbReference type="EC" id="1.1.1.1"/>
    </reaction>
</comment>
<comment type="catalytic activity">
    <reaction>
        <text>a secondary alcohol + NAD(+) = a ketone + NADH + H(+)</text>
        <dbReference type="Rhea" id="RHEA:10740"/>
        <dbReference type="ChEBI" id="CHEBI:15378"/>
        <dbReference type="ChEBI" id="CHEBI:17087"/>
        <dbReference type="ChEBI" id="CHEBI:35681"/>
        <dbReference type="ChEBI" id="CHEBI:57540"/>
        <dbReference type="ChEBI" id="CHEBI:57945"/>
        <dbReference type="EC" id="1.1.1.1"/>
    </reaction>
</comment>
<comment type="cofactor">
    <cofactor evidence="1">
        <name>Zn(2+)</name>
        <dbReference type="ChEBI" id="CHEBI:29105"/>
    </cofactor>
    <text evidence="1">Binds 2 Zn(2+) ions per subunit.</text>
</comment>
<comment type="similarity">
    <text evidence="2">Belongs to the zinc-containing alcohol dehydrogenase family.</text>
</comment>
<keyword id="KW-0479">Metal-binding</keyword>
<keyword id="KW-0520">NAD</keyword>
<keyword id="KW-0560">Oxidoreductase</keyword>
<keyword id="KW-0862">Zinc</keyword>
<organism>
    <name type="scientific">Staphylococcus aureus (strain Mu50 / ATCC 700699)</name>
    <dbReference type="NCBI Taxonomy" id="158878"/>
    <lineage>
        <taxon>Bacteria</taxon>
        <taxon>Bacillati</taxon>
        <taxon>Bacillota</taxon>
        <taxon>Bacilli</taxon>
        <taxon>Bacillales</taxon>
        <taxon>Staphylococcaceae</taxon>
        <taxon>Staphylococcus</taxon>
    </lineage>
</organism>
<proteinExistence type="inferred from homology"/>
<name>ADH_STAAM</name>
<dbReference type="EC" id="1.1.1.1"/>
<dbReference type="EMBL" id="BA000017">
    <property type="protein sequence ID" value="BAB56767.1"/>
    <property type="molecule type" value="Genomic_DNA"/>
</dbReference>
<dbReference type="SMR" id="Q99W07"/>
<dbReference type="KEGG" id="sav:SAV0605"/>
<dbReference type="HOGENOM" id="CLU_026673_20_1_9"/>
<dbReference type="PhylomeDB" id="Q99W07"/>
<dbReference type="Proteomes" id="UP000002481">
    <property type="component" value="Chromosome"/>
</dbReference>
<dbReference type="GO" id="GO:0004022">
    <property type="term" value="F:alcohol dehydrogenase (NAD+) activity"/>
    <property type="evidence" value="ECO:0007669"/>
    <property type="project" value="UniProtKB-EC"/>
</dbReference>
<dbReference type="GO" id="GO:0008270">
    <property type="term" value="F:zinc ion binding"/>
    <property type="evidence" value="ECO:0007669"/>
    <property type="project" value="InterPro"/>
</dbReference>
<dbReference type="CDD" id="cd08297">
    <property type="entry name" value="CAD3"/>
    <property type="match status" value="1"/>
</dbReference>
<dbReference type="FunFam" id="3.40.50.720:FF:000039">
    <property type="entry name" value="Alcohol dehydrogenase AdhP"/>
    <property type="match status" value="1"/>
</dbReference>
<dbReference type="Gene3D" id="3.90.180.10">
    <property type="entry name" value="Medium-chain alcohol dehydrogenases, catalytic domain"/>
    <property type="match status" value="1"/>
</dbReference>
<dbReference type="Gene3D" id="3.40.50.720">
    <property type="entry name" value="NAD(P)-binding Rossmann-like Domain"/>
    <property type="match status" value="1"/>
</dbReference>
<dbReference type="InterPro" id="IPR013149">
    <property type="entry name" value="ADH-like_C"/>
</dbReference>
<dbReference type="InterPro" id="IPR013154">
    <property type="entry name" value="ADH-like_N"/>
</dbReference>
<dbReference type="InterPro" id="IPR002328">
    <property type="entry name" value="ADH_Zn_CS"/>
</dbReference>
<dbReference type="InterPro" id="IPR029752">
    <property type="entry name" value="D-isomer_DH_CS1"/>
</dbReference>
<dbReference type="InterPro" id="IPR011032">
    <property type="entry name" value="GroES-like_sf"/>
</dbReference>
<dbReference type="InterPro" id="IPR036291">
    <property type="entry name" value="NAD(P)-bd_dom_sf"/>
</dbReference>
<dbReference type="InterPro" id="IPR020843">
    <property type="entry name" value="PKS_ER"/>
</dbReference>
<dbReference type="NCBIfam" id="NF006940">
    <property type="entry name" value="PRK09422.1"/>
    <property type="match status" value="1"/>
</dbReference>
<dbReference type="PANTHER" id="PTHR42940">
    <property type="entry name" value="ALCOHOL DEHYDROGENASE 1-RELATED"/>
    <property type="match status" value="1"/>
</dbReference>
<dbReference type="PANTHER" id="PTHR42940:SF8">
    <property type="entry name" value="VACUOLAR PROTEIN SORTING-ASSOCIATED PROTEIN 11"/>
    <property type="match status" value="1"/>
</dbReference>
<dbReference type="Pfam" id="PF08240">
    <property type="entry name" value="ADH_N"/>
    <property type="match status" value="1"/>
</dbReference>
<dbReference type="Pfam" id="PF00107">
    <property type="entry name" value="ADH_zinc_N"/>
    <property type="match status" value="1"/>
</dbReference>
<dbReference type="SMART" id="SM00829">
    <property type="entry name" value="PKS_ER"/>
    <property type="match status" value="1"/>
</dbReference>
<dbReference type="SUPFAM" id="SSF50129">
    <property type="entry name" value="GroES-like"/>
    <property type="match status" value="1"/>
</dbReference>
<dbReference type="SUPFAM" id="SSF51735">
    <property type="entry name" value="NAD(P)-binding Rossmann-fold domains"/>
    <property type="match status" value="1"/>
</dbReference>
<dbReference type="PROSITE" id="PS00059">
    <property type="entry name" value="ADH_ZINC"/>
    <property type="match status" value="1"/>
</dbReference>
<sequence length="336" mass="36062">MRAAVVTKDHKVSIEDKKLRALKPGEALVQTEYCGVCHTDLHVKNADFGDVTGVTLGHEGIGKVIEVAEDVESLKIGDRVSIAWMFESCGRCEYCTTGRETLCRSVKNAGYTVDGAMAEQVIVTADYAVKVPEKLDPAAASSITCAGVTTYKAVKVSNVKPGQWLGVFGIGGLGNLALQYAKNVMGAKIVAFDINDDKLAFAKELGADAIINSKDVDPVAEVMKLTDNKGLDATVVTSVAKTPFNQAVDVVKAGARVVAVGLPVDKMNLDIPRLVLDGIEVVGSLVGTRQDLREAFEFAAENKVTPKVQLRKLEEINDIFEEMEKGTITGRMVIKF</sequence>
<protein>
    <recommendedName>
        <fullName>Alcohol dehydrogenase</fullName>
        <shortName>ADH</shortName>
        <ecNumber>1.1.1.1</ecNumber>
    </recommendedName>
</protein>
<evidence type="ECO:0000250" key="1"/>
<evidence type="ECO:0000305" key="2"/>